<proteinExistence type="inferred from homology"/>
<organism>
    <name type="scientific">Rhodopseudomonas palustris (strain BisB18)</name>
    <dbReference type="NCBI Taxonomy" id="316056"/>
    <lineage>
        <taxon>Bacteria</taxon>
        <taxon>Pseudomonadati</taxon>
        <taxon>Pseudomonadota</taxon>
        <taxon>Alphaproteobacteria</taxon>
        <taxon>Hyphomicrobiales</taxon>
        <taxon>Nitrobacteraceae</taxon>
        <taxon>Rhodopseudomonas</taxon>
    </lineage>
</organism>
<gene>
    <name evidence="1" type="primary">mutS</name>
    <name type="ordered locus">RPC_0363</name>
</gene>
<accession>Q21CE8</accession>
<reference key="1">
    <citation type="submission" date="2006-03" db="EMBL/GenBank/DDBJ databases">
        <title>Complete sequence of Rhodopseudomonas palustris BisB18.</title>
        <authorList>
            <consortium name="US DOE Joint Genome Institute"/>
            <person name="Copeland A."/>
            <person name="Lucas S."/>
            <person name="Lapidus A."/>
            <person name="Barry K."/>
            <person name="Detter J.C."/>
            <person name="Glavina del Rio T."/>
            <person name="Hammon N."/>
            <person name="Israni S."/>
            <person name="Dalin E."/>
            <person name="Tice H."/>
            <person name="Pitluck S."/>
            <person name="Chain P."/>
            <person name="Malfatti S."/>
            <person name="Shin M."/>
            <person name="Vergez L."/>
            <person name="Schmutz J."/>
            <person name="Larimer F."/>
            <person name="Land M."/>
            <person name="Hauser L."/>
            <person name="Pelletier D.A."/>
            <person name="Kyrpides N."/>
            <person name="Anderson I."/>
            <person name="Oda Y."/>
            <person name="Harwood C.S."/>
            <person name="Richardson P."/>
        </authorList>
    </citation>
    <scope>NUCLEOTIDE SEQUENCE [LARGE SCALE GENOMIC DNA]</scope>
    <source>
        <strain>BisB18</strain>
    </source>
</reference>
<keyword id="KW-0067">ATP-binding</keyword>
<keyword id="KW-0227">DNA damage</keyword>
<keyword id="KW-0234">DNA repair</keyword>
<keyword id="KW-0238">DNA-binding</keyword>
<keyword id="KW-0547">Nucleotide-binding</keyword>
<feature type="chain" id="PRO_0000335214" description="DNA mismatch repair protein MutS">
    <location>
        <begin position="1"/>
        <end position="905"/>
    </location>
</feature>
<feature type="region of interest" description="Disordered" evidence="2">
    <location>
        <begin position="272"/>
        <end position="292"/>
    </location>
</feature>
<feature type="binding site" evidence="1">
    <location>
        <begin position="654"/>
        <end position="661"/>
    </location>
    <ligand>
        <name>ATP</name>
        <dbReference type="ChEBI" id="CHEBI:30616"/>
    </ligand>
</feature>
<dbReference type="EMBL" id="CP000301">
    <property type="protein sequence ID" value="ABD85938.1"/>
    <property type="status" value="ALT_INIT"/>
    <property type="molecule type" value="Genomic_DNA"/>
</dbReference>
<dbReference type="SMR" id="Q21CE8"/>
<dbReference type="STRING" id="316056.RPC_0363"/>
<dbReference type="KEGG" id="rpc:RPC_0363"/>
<dbReference type="eggNOG" id="COG0249">
    <property type="taxonomic scope" value="Bacteria"/>
</dbReference>
<dbReference type="HOGENOM" id="CLU_002472_4_0_5"/>
<dbReference type="OrthoDB" id="9802448at2"/>
<dbReference type="GO" id="GO:0005829">
    <property type="term" value="C:cytosol"/>
    <property type="evidence" value="ECO:0007669"/>
    <property type="project" value="TreeGrafter"/>
</dbReference>
<dbReference type="GO" id="GO:0005524">
    <property type="term" value="F:ATP binding"/>
    <property type="evidence" value="ECO:0007669"/>
    <property type="project" value="UniProtKB-UniRule"/>
</dbReference>
<dbReference type="GO" id="GO:0140664">
    <property type="term" value="F:ATP-dependent DNA damage sensor activity"/>
    <property type="evidence" value="ECO:0007669"/>
    <property type="project" value="InterPro"/>
</dbReference>
<dbReference type="GO" id="GO:0003684">
    <property type="term" value="F:damaged DNA binding"/>
    <property type="evidence" value="ECO:0007669"/>
    <property type="project" value="UniProtKB-UniRule"/>
</dbReference>
<dbReference type="GO" id="GO:0030983">
    <property type="term" value="F:mismatched DNA binding"/>
    <property type="evidence" value="ECO:0007669"/>
    <property type="project" value="InterPro"/>
</dbReference>
<dbReference type="GO" id="GO:0006298">
    <property type="term" value="P:mismatch repair"/>
    <property type="evidence" value="ECO:0007669"/>
    <property type="project" value="UniProtKB-UniRule"/>
</dbReference>
<dbReference type="CDD" id="cd03284">
    <property type="entry name" value="ABC_MutS1"/>
    <property type="match status" value="1"/>
</dbReference>
<dbReference type="FunFam" id="3.40.1170.10:FF:000001">
    <property type="entry name" value="DNA mismatch repair protein MutS"/>
    <property type="match status" value="1"/>
</dbReference>
<dbReference type="FunFam" id="3.40.50.300:FF:001579">
    <property type="entry name" value="DNA mismatch repair protein MutS"/>
    <property type="match status" value="1"/>
</dbReference>
<dbReference type="Gene3D" id="1.10.1420.10">
    <property type="match status" value="2"/>
</dbReference>
<dbReference type="Gene3D" id="6.10.140.430">
    <property type="match status" value="1"/>
</dbReference>
<dbReference type="Gene3D" id="3.40.1170.10">
    <property type="entry name" value="DNA repair protein MutS, domain I"/>
    <property type="match status" value="1"/>
</dbReference>
<dbReference type="Gene3D" id="3.30.420.110">
    <property type="entry name" value="MutS, connector domain"/>
    <property type="match status" value="1"/>
</dbReference>
<dbReference type="Gene3D" id="3.40.50.300">
    <property type="entry name" value="P-loop containing nucleotide triphosphate hydrolases"/>
    <property type="match status" value="1"/>
</dbReference>
<dbReference type="HAMAP" id="MF_00096">
    <property type="entry name" value="MutS"/>
    <property type="match status" value="1"/>
</dbReference>
<dbReference type="InterPro" id="IPR005748">
    <property type="entry name" value="DNA_mismatch_repair_MutS"/>
</dbReference>
<dbReference type="InterPro" id="IPR007695">
    <property type="entry name" value="DNA_mismatch_repair_MutS-lik_N"/>
</dbReference>
<dbReference type="InterPro" id="IPR017261">
    <property type="entry name" value="DNA_mismatch_repair_MutS/MSH"/>
</dbReference>
<dbReference type="InterPro" id="IPR000432">
    <property type="entry name" value="DNA_mismatch_repair_MutS_C"/>
</dbReference>
<dbReference type="InterPro" id="IPR007861">
    <property type="entry name" value="DNA_mismatch_repair_MutS_clamp"/>
</dbReference>
<dbReference type="InterPro" id="IPR007696">
    <property type="entry name" value="DNA_mismatch_repair_MutS_core"/>
</dbReference>
<dbReference type="InterPro" id="IPR016151">
    <property type="entry name" value="DNA_mismatch_repair_MutS_N"/>
</dbReference>
<dbReference type="InterPro" id="IPR036187">
    <property type="entry name" value="DNA_mismatch_repair_MutS_sf"/>
</dbReference>
<dbReference type="InterPro" id="IPR007860">
    <property type="entry name" value="DNA_mmatch_repair_MutS_con_dom"/>
</dbReference>
<dbReference type="InterPro" id="IPR045076">
    <property type="entry name" value="MutS"/>
</dbReference>
<dbReference type="InterPro" id="IPR036678">
    <property type="entry name" value="MutS_con_dom_sf"/>
</dbReference>
<dbReference type="InterPro" id="IPR027417">
    <property type="entry name" value="P-loop_NTPase"/>
</dbReference>
<dbReference type="NCBIfam" id="TIGR01070">
    <property type="entry name" value="mutS1"/>
    <property type="match status" value="1"/>
</dbReference>
<dbReference type="NCBIfam" id="NF003810">
    <property type="entry name" value="PRK05399.1"/>
    <property type="match status" value="1"/>
</dbReference>
<dbReference type="PANTHER" id="PTHR11361:SF34">
    <property type="entry name" value="DNA MISMATCH REPAIR PROTEIN MSH1, MITOCHONDRIAL"/>
    <property type="match status" value="1"/>
</dbReference>
<dbReference type="PANTHER" id="PTHR11361">
    <property type="entry name" value="DNA MISMATCH REPAIR PROTEIN MUTS FAMILY MEMBER"/>
    <property type="match status" value="1"/>
</dbReference>
<dbReference type="Pfam" id="PF01624">
    <property type="entry name" value="MutS_I"/>
    <property type="match status" value="1"/>
</dbReference>
<dbReference type="Pfam" id="PF05188">
    <property type="entry name" value="MutS_II"/>
    <property type="match status" value="1"/>
</dbReference>
<dbReference type="Pfam" id="PF05192">
    <property type="entry name" value="MutS_III"/>
    <property type="match status" value="1"/>
</dbReference>
<dbReference type="Pfam" id="PF05190">
    <property type="entry name" value="MutS_IV"/>
    <property type="match status" value="1"/>
</dbReference>
<dbReference type="Pfam" id="PF00488">
    <property type="entry name" value="MutS_V"/>
    <property type="match status" value="1"/>
</dbReference>
<dbReference type="PIRSF" id="PIRSF037677">
    <property type="entry name" value="DNA_mis_repair_Msh6"/>
    <property type="match status" value="1"/>
</dbReference>
<dbReference type="SMART" id="SM00534">
    <property type="entry name" value="MUTSac"/>
    <property type="match status" value="1"/>
</dbReference>
<dbReference type="SMART" id="SM00533">
    <property type="entry name" value="MUTSd"/>
    <property type="match status" value="1"/>
</dbReference>
<dbReference type="SUPFAM" id="SSF55271">
    <property type="entry name" value="DNA repair protein MutS, domain I"/>
    <property type="match status" value="1"/>
</dbReference>
<dbReference type="SUPFAM" id="SSF53150">
    <property type="entry name" value="DNA repair protein MutS, domain II"/>
    <property type="match status" value="1"/>
</dbReference>
<dbReference type="SUPFAM" id="SSF48334">
    <property type="entry name" value="DNA repair protein MutS, domain III"/>
    <property type="match status" value="1"/>
</dbReference>
<dbReference type="SUPFAM" id="SSF52540">
    <property type="entry name" value="P-loop containing nucleoside triphosphate hydrolases"/>
    <property type="match status" value="1"/>
</dbReference>
<dbReference type="PROSITE" id="PS00486">
    <property type="entry name" value="DNA_MISMATCH_REPAIR_2"/>
    <property type="match status" value="1"/>
</dbReference>
<name>MUTS_RHOPB</name>
<sequence>MSIEPDISPSPDTPAPIEAKVSPMMEQYHEIKAANPGLLLFYRMGDFYELFFEDAEIAARALGITLTKRGKHKGQDIPMCGVPVERSDDYLHRLIALGHRVAVCEQTEDPAAARARKSVVRRDVVRLITPGTLTEDTLLDARANNYLLAIARARASAGADRIGLAWIDISTAEFIVTECAPAELAATLARINPNEAIVTDALYSDPELGPLLRELPAVTPLTRDVFDSATAERRLCDYFAVATMDGLSAMSRLEATAAAACVTYIDRTQLGKKPPLSPPSREATGSTMAIDPATRANLELTRTLSGERRGSLLDAIDCTVTAAGSRLLAQRLAAPLTDVEQIAQRLDAVAALLPDPGLREALRATLRAAPDMSRALARLSVGRGGPRDLAALRDGLLAADQALAQLGALEVPPKEIQTAMAALRRPSRDLAQEFSRALADDLPLMKRDGGFVREGYHDALDETRKLRDDSRLIVAAMQARYADDCGVKGLKIRHNNVLGYFVEVTAQHGDKLMAPPLNLTFIHRQTLAGQTRFTTAELGEIEAKIANAGDRALGLELEIFERLVALVQAATDDLRAAAHGFAALDVTLALAKLAVDDNYVRPEVDGSLSFAIEGGRHPVVEQALRRDGQPFIANACDLSPGPGQQSGQIWLITGPNMAGKSTFLRQNALIALLAQIGSFVPASRARIGIVDRLFSRVGAADDLARGRSTFMVEMVETAVILNQASERALVILDEIGRGTATFDGLSIAWAAIEHLHESNRCRSLFATHYHELTALSAKLPRLFNATVRVKEWHGDVVFLHEVLPGSADRSYGIQVAKLAGLPPSVITRAKSVLAKLEAQDRGQSARALAEDLPLFAVTARAAAEPSPPSEAERLIEALKALHPDELSPREALDALYALKAKLGKA</sequence>
<comment type="function">
    <text evidence="1">This protein is involved in the repair of mismatches in DNA. It is possible that it carries out the mismatch recognition step. This protein has a weak ATPase activity.</text>
</comment>
<comment type="similarity">
    <text evidence="1">Belongs to the DNA mismatch repair MutS family.</text>
</comment>
<comment type="sequence caution" evidence="3">
    <conflict type="erroneous initiation">
        <sequence resource="EMBL-CDS" id="ABD85938"/>
    </conflict>
</comment>
<evidence type="ECO:0000255" key="1">
    <source>
        <dbReference type="HAMAP-Rule" id="MF_00096"/>
    </source>
</evidence>
<evidence type="ECO:0000256" key="2">
    <source>
        <dbReference type="SAM" id="MobiDB-lite"/>
    </source>
</evidence>
<evidence type="ECO:0000305" key="3"/>
<protein>
    <recommendedName>
        <fullName evidence="1">DNA mismatch repair protein MutS</fullName>
    </recommendedName>
</protein>